<evidence type="ECO:0000255" key="1">
    <source>
        <dbReference type="HAMAP-Rule" id="MF_00235"/>
    </source>
</evidence>
<sequence>MNIILFGPPGAGKGTQAKKLVDFYGIPQISTGDILRANVREGTELGLAAKAYMDKGELVPDQVLIGIIKNRLNEADCEKGFILDGYPRTVPQADALEAILDEIEKPIDVVLNLEVPDEVLVGRISGRLMCKCGASYHIISNPPKKDNVCDICGGEVFQRADDTAEAVQNRLDVYKKQTQPLINYYKEKGILVTLDGTKEIDVVFEDLKAILAKFA</sequence>
<keyword id="KW-0067">ATP-binding</keyword>
<keyword id="KW-0963">Cytoplasm</keyword>
<keyword id="KW-0418">Kinase</keyword>
<keyword id="KW-0479">Metal-binding</keyword>
<keyword id="KW-0545">Nucleotide biosynthesis</keyword>
<keyword id="KW-0547">Nucleotide-binding</keyword>
<keyword id="KW-1185">Reference proteome</keyword>
<keyword id="KW-0808">Transferase</keyword>
<keyword id="KW-0862">Zinc</keyword>
<gene>
    <name evidence="1" type="primary">adk</name>
    <name type="ordered locus">MA_1096</name>
</gene>
<name>KAD_METAC</name>
<reference key="1">
    <citation type="journal article" date="2002" name="Genome Res.">
        <title>The genome of Methanosarcina acetivorans reveals extensive metabolic and physiological diversity.</title>
        <authorList>
            <person name="Galagan J.E."/>
            <person name="Nusbaum C."/>
            <person name="Roy A."/>
            <person name="Endrizzi M.G."/>
            <person name="Macdonald P."/>
            <person name="FitzHugh W."/>
            <person name="Calvo S."/>
            <person name="Engels R."/>
            <person name="Smirnov S."/>
            <person name="Atnoor D."/>
            <person name="Brown A."/>
            <person name="Allen N."/>
            <person name="Naylor J."/>
            <person name="Stange-Thomann N."/>
            <person name="DeArellano K."/>
            <person name="Johnson R."/>
            <person name="Linton L."/>
            <person name="McEwan P."/>
            <person name="McKernan K."/>
            <person name="Talamas J."/>
            <person name="Tirrell A."/>
            <person name="Ye W."/>
            <person name="Zimmer A."/>
            <person name="Barber R.D."/>
            <person name="Cann I."/>
            <person name="Graham D.E."/>
            <person name="Grahame D.A."/>
            <person name="Guss A.M."/>
            <person name="Hedderich R."/>
            <person name="Ingram-Smith C."/>
            <person name="Kuettner H.C."/>
            <person name="Krzycki J.A."/>
            <person name="Leigh J.A."/>
            <person name="Li W."/>
            <person name="Liu J."/>
            <person name="Mukhopadhyay B."/>
            <person name="Reeve J.N."/>
            <person name="Smith K."/>
            <person name="Springer T.A."/>
            <person name="Umayam L.A."/>
            <person name="White O."/>
            <person name="White R.H."/>
            <person name="de Macario E.C."/>
            <person name="Ferry J.G."/>
            <person name="Jarrell K.F."/>
            <person name="Jing H."/>
            <person name="Macario A.J.L."/>
            <person name="Paulsen I.T."/>
            <person name="Pritchett M."/>
            <person name="Sowers K.R."/>
            <person name="Swanson R.V."/>
            <person name="Zinder S.H."/>
            <person name="Lander E."/>
            <person name="Metcalf W.W."/>
            <person name="Birren B."/>
        </authorList>
    </citation>
    <scope>NUCLEOTIDE SEQUENCE [LARGE SCALE GENOMIC DNA]</scope>
    <source>
        <strain>ATCC 35395 / DSM 2834 / JCM 12185 / C2A</strain>
    </source>
</reference>
<protein>
    <recommendedName>
        <fullName evidence="1">Adenylate kinase</fullName>
        <shortName evidence="1">AK</shortName>
        <ecNumber evidence="1">2.7.4.3</ecNumber>
    </recommendedName>
    <alternativeName>
        <fullName evidence="1">ATP-AMP transphosphorylase</fullName>
    </alternativeName>
    <alternativeName>
        <fullName evidence="1">ATP:AMP phosphotransferase</fullName>
    </alternativeName>
    <alternativeName>
        <fullName evidence="1">Adenylate monophosphate kinase</fullName>
    </alternativeName>
</protein>
<comment type="function">
    <text evidence="1">Catalyzes the reversible transfer of the terminal phosphate group between ATP and AMP. Plays an important role in cellular energy homeostasis and in adenine nucleotide metabolism.</text>
</comment>
<comment type="catalytic activity">
    <reaction evidence="1">
        <text>AMP + ATP = 2 ADP</text>
        <dbReference type="Rhea" id="RHEA:12973"/>
        <dbReference type="ChEBI" id="CHEBI:30616"/>
        <dbReference type="ChEBI" id="CHEBI:456215"/>
        <dbReference type="ChEBI" id="CHEBI:456216"/>
        <dbReference type="EC" id="2.7.4.3"/>
    </reaction>
</comment>
<comment type="pathway">
    <text evidence="1">Purine metabolism; AMP biosynthesis via salvage pathway; AMP from ADP: step 1/1.</text>
</comment>
<comment type="subunit">
    <text evidence="1">Monomer.</text>
</comment>
<comment type="subcellular location">
    <subcellularLocation>
        <location evidence="1">Cytoplasm</location>
    </subcellularLocation>
</comment>
<comment type="domain">
    <text evidence="1">Consists of three domains, a large central CORE domain and two small peripheral domains, NMPbind and LID, which undergo movements during catalysis. The LID domain closes over the site of phosphoryl transfer upon ATP binding. Assembling and dissambling the active center during each catalytic cycle provides an effective means to prevent ATP hydrolysis. Some bacteria have evolved a zinc-coordinating structure that stabilizes the LID domain.</text>
</comment>
<comment type="similarity">
    <text evidence="1">Belongs to the adenylate kinase family.</text>
</comment>
<accession>Q8TRS3</accession>
<feature type="chain" id="PRO_0000158899" description="Adenylate kinase">
    <location>
        <begin position="1"/>
        <end position="215"/>
    </location>
</feature>
<feature type="region of interest" description="NMP" evidence="1">
    <location>
        <begin position="30"/>
        <end position="59"/>
    </location>
</feature>
<feature type="region of interest" description="LID" evidence="1">
    <location>
        <begin position="126"/>
        <end position="162"/>
    </location>
</feature>
<feature type="binding site" evidence="1">
    <location>
        <begin position="10"/>
        <end position="15"/>
    </location>
    <ligand>
        <name>ATP</name>
        <dbReference type="ChEBI" id="CHEBI:30616"/>
    </ligand>
</feature>
<feature type="binding site" evidence="1">
    <location>
        <position position="31"/>
    </location>
    <ligand>
        <name>AMP</name>
        <dbReference type="ChEBI" id="CHEBI:456215"/>
    </ligand>
</feature>
<feature type="binding site" evidence="1">
    <location>
        <position position="36"/>
    </location>
    <ligand>
        <name>AMP</name>
        <dbReference type="ChEBI" id="CHEBI:456215"/>
    </ligand>
</feature>
<feature type="binding site" evidence="1">
    <location>
        <begin position="57"/>
        <end position="59"/>
    </location>
    <ligand>
        <name>AMP</name>
        <dbReference type="ChEBI" id="CHEBI:456215"/>
    </ligand>
</feature>
<feature type="binding site" evidence="1">
    <location>
        <begin position="85"/>
        <end position="88"/>
    </location>
    <ligand>
        <name>AMP</name>
        <dbReference type="ChEBI" id="CHEBI:456215"/>
    </ligand>
</feature>
<feature type="binding site" evidence="1">
    <location>
        <position position="92"/>
    </location>
    <ligand>
        <name>AMP</name>
        <dbReference type="ChEBI" id="CHEBI:456215"/>
    </ligand>
</feature>
<feature type="binding site" evidence="1">
    <location>
        <position position="127"/>
    </location>
    <ligand>
        <name>ATP</name>
        <dbReference type="ChEBI" id="CHEBI:30616"/>
    </ligand>
</feature>
<feature type="binding site" evidence="1">
    <location>
        <position position="130"/>
    </location>
    <ligand>
        <name>Zn(2+)</name>
        <dbReference type="ChEBI" id="CHEBI:29105"/>
        <note>structural</note>
    </ligand>
</feature>
<feature type="binding site" evidence="1">
    <location>
        <position position="132"/>
    </location>
    <ligand>
        <name>Zn(2+)</name>
        <dbReference type="ChEBI" id="CHEBI:29105"/>
        <note>structural</note>
    </ligand>
</feature>
<feature type="binding site" evidence="1">
    <location>
        <begin position="135"/>
        <end position="136"/>
    </location>
    <ligand>
        <name>ATP</name>
        <dbReference type="ChEBI" id="CHEBI:30616"/>
    </ligand>
</feature>
<feature type="binding site" evidence="1">
    <location>
        <position position="149"/>
    </location>
    <ligand>
        <name>Zn(2+)</name>
        <dbReference type="ChEBI" id="CHEBI:29105"/>
        <note>structural</note>
    </ligand>
</feature>
<feature type="binding site" evidence="1">
    <location>
        <position position="152"/>
    </location>
    <ligand>
        <name>Zn(2+)</name>
        <dbReference type="ChEBI" id="CHEBI:29105"/>
        <note>structural</note>
    </ligand>
</feature>
<feature type="binding site" evidence="1">
    <location>
        <position position="159"/>
    </location>
    <ligand>
        <name>AMP</name>
        <dbReference type="ChEBI" id="CHEBI:456215"/>
    </ligand>
</feature>
<feature type="binding site" evidence="1">
    <location>
        <position position="170"/>
    </location>
    <ligand>
        <name>AMP</name>
        <dbReference type="ChEBI" id="CHEBI:456215"/>
    </ligand>
</feature>
<feature type="binding site" evidence="1">
    <location>
        <position position="198"/>
    </location>
    <ligand>
        <name>ATP</name>
        <dbReference type="ChEBI" id="CHEBI:30616"/>
    </ligand>
</feature>
<proteinExistence type="inferred from homology"/>
<dbReference type="EC" id="2.7.4.3" evidence="1"/>
<dbReference type="EMBL" id="AE010299">
    <property type="protein sequence ID" value="AAM04521.1"/>
    <property type="molecule type" value="Genomic_DNA"/>
</dbReference>
<dbReference type="RefSeq" id="WP_011021125.1">
    <property type="nucleotide sequence ID" value="NC_003552.1"/>
</dbReference>
<dbReference type="SMR" id="Q8TRS3"/>
<dbReference type="STRING" id="188937.MA_1096"/>
<dbReference type="EnsemblBacteria" id="AAM04521">
    <property type="protein sequence ID" value="AAM04521"/>
    <property type="gene ID" value="MA_1096"/>
</dbReference>
<dbReference type="GeneID" id="1472986"/>
<dbReference type="KEGG" id="mac:MA_1096"/>
<dbReference type="HOGENOM" id="CLU_032354_1_2_2"/>
<dbReference type="InParanoid" id="Q8TRS3"/>
<dbReference type="OrthoDB" id="31230at2157"/>
<dbReference type="PhylomeDB" id="Q8TRS3"/>
<dbReference type="UniPathway" id="UPA00588">
    <property type="reaction ID" value="UER00649"/>
</dbReference>
<dbReference type="Proteomes" id="UP000002487">
    <property type="component" value="Chromosome"/>
</dbReference>
<dbReference type="GO" id="GO:0005737">
    <property type="term" value="C:cytoplasm"/>
    <property type="evidence" value="ECO:0000318"/>
    <property type="project" value="GO_Central"/>
</dbReference>
<dbReference type="GO" id="GO:0005829">
    <property type="term" value="C:cytosol"/>
    <property type="evidence" value="ECO:0000318"/>
    <property type="project" value="GO_Central"/>
</dbReference>
<dbReference type="GO" id="GO:0004017">
    <property type="term" value="F:adenylate kinase activity"/>
    <property type="evidence" value="ECO:0000318"/>
    <property type="project" value="GO_Central"/>
</dbReference>
<dbReference type="GO" id="GO:0005524">
    <property type="term" value="F:ATP binding"/>
    <property type="evidence" value="ECO:0007669"/>
    <property type="project" value="UniProtKB-UniRule"/>
</dbReference>
<dbReference type="GO" id="GO:0004550">
    <property type="term" value="F:nucleoside diphosphate kinase activity"/>
    <property type="evidence" value="ECO:0000318"/>
    <property type="project" value="GO_Central"/>
</dbReference>
<dbReference type="GO" id="GO:0008270">
    <property type="term" value="F:zinc ion binding"/>
    <property type="evidence" value="ECO:0007669"/>
    <property type="project" value="UniProtKB-UniRule"/>
</dbReference>
<dbReference type="GO" id="GO:0044209">
    <property type="term" value="P:AMP salvage"/>
    <property type="evidence" value="ECO:0007669"/>
    <property type="project" value="UniProtKB-UniRule"/>
</dbReference>
<dbReference type="GO" id="GO:0009132">
    <property type="term" value="P:nucleoside diphosphate metabolic process"/>
    <property type="evidence" value="ECO:0000318"/>
    <property type="project" value="GO_Central"/>
</dbReference>
<dbReference type="GO" id="GO:0009123">
    <property type="term" value="P:nucleoside monophosphate metabolic process"/>
    <property type="evidence" value="ECO:0000318"/>
    <property type="project" value="GO_Central"/>
</dbReference>
<dbReference type="CDD" id="cd01428">
    <property type="entry name" value="ADK"/>
    <property type="match status" value="1"/>
</dbReference>
<dbReference type="FunFam" id="3.40.50.300:FF:000106">
    <property type="entry name" value="Adenylate kinase mitochondrial"/>
    <property type="match status" value="1"/>
</dbReference>
<dbReference type="Gene3D" id="3.40.50.300">
    <property type="entry name" value="P-loop containing nucleotide triphosphate hydrolases"/>
    <property type="match status" value="1"/>
</dbReference>
<dbReference type="HAMAP" id="MF_00235">
    <property type="entry name" value="Adenylate_kinase_Adk"/>
    <property type="match status" value="1"/>
</dbReference>
<dbReference type="InterPro" id="IPR006259">
    <property type="entry name" value="Adenyl_kin_sub"/>
</dbReference>
<dbReference type="InterPro" id="IPR000850">
    <property type="entry name" value="Adenylat/UMP-CMP_kin"/>
</dbReference>
<dbReference type="InterPro" id="IPR033690">
    <property type="entry name" value="Adenylat_kinase_CS"/>
</dbReference>
<dbReference type="InterPro" id="IPR007862">
    <property type="entry name" value="Adenylate_kinase_lid-dom"/>
</dbReference>
<dbReference type="InterPro" id="IPR008144">
    <property type="entry name" value="Guanylate_kin-like_dom"/>
</dbReference>
<dbReference type="InterPro" id="IPR027417">
    <property type="entry name" value="P-loop_NTPase"/>
</dbReference>
<dbReference type="NCBIfam" id="TIGR01351">
    <property type="entry name" value="adk"/>
    <property type="match status" value="1"/>
</dbReference>
<dbReference type="NCBIfam" id="NF001380">
    <property type="entry name" value="PRK00279.1-2"/>
    <property type="match status" value="1"/>
</dbReference>
<dbReference type="NCBIfam" id="NF001381">
    <property type="entry name" value="PRK00279.1-3"/>
    <property type="match status" value="1"/>
</dbReference>
<dbReference type="NCBIfam" id="NF011100">
    <property type="entry name" value="PRK14527.1"/>
    <property type="match status" value="1"/>
</dbReference>
<dbReference type="PANTHER" id="PTHR23359">
    <property type="entry name" value="NUCLEOTIDE KINASE"/>
    <property type="match status" value="1"/>
</dbReference>
<dbReference type="Pfam" id="PF00406">
    <property type="entry name" value="ADK"/>
    <property type="match status" value="1"/>
</dbReference>
<dbReference type="Pfam" id="PF05191">
    <property type="entry name" value="ADK_lid"/>
    <property type="match status" value="1"/>
</dbReference>
<dbReference type="PRINTS" id="PR00094">
    <property type="entry name" value="ADENYLTKNASE"/>
</dbReference>
<dbReference type="SUPFAM" id="SSF52540">
    <property type="entry name" value="P-loop containing nucleoside triphosphate hydrolases"/>
    <property type="match status" value="1"/>
</dbReference>
<dbReference type="PROSITE" id="PS00113">
    <property type="entry name" value="ADENYLATE_KINASE"/>
    <property type="match status" value="1"/>
</dbReference>
<organism>
    <name type="scientific">Methanosarcina acetivorans (strain ATCC 35395 / DSM 2834 / JCM 12185 / C2A)</name>
    <dbReference type="NCBI Taxonomy" id="188937"/>
    <lineage>
        <taxon>Archaea</taxon>
        <taxon>Methanobacteriati</taxon>
        <taxon>Methanobacteriota</taxon>
        <taxon>Stenosarchaea group</taxon>
        <taxon>Methanomicrobia</taxon>
        <taxon>Methanosarcinales</taxon>
        <taxon>Methanosarcinaceae</taxon>
        <taxon>Methanosarcina</taxon>
    </lineage>
</organism>